<dbReference type="EC" id="6.1.1.7" evidence="1"/>
<dbReference type="EMBL" id="CP000133">
    <property type="protein sequence ID" value="ABC91102.1"/>
    <property type="status" value="ALT_INIT"/>
    <property type="molecule type" value="Genomic_DNA"/>
</dbReference>
<dbReference type="RefSeq" id="WP_042118550.1">
    <property type="nucleotide sequence ID" value="NC_007761.1"/>
</dbReference>
<dbReference type="SMR" id="Q2K7T4"/>
<dbReference type="KEGG" id="ret:RHE_CH02322"/>
<dbReference type="eggNOG" id="COG0013">
    <property type="taxonomic scope" value="Bacteria"/>
</dbReference>
<dbReference type="HOGENOM" id="CLU_004485_1_1_5"/>
<dbReference type="OrthoDB" id="9803884at2"/>
<dbReference type="Proteomes" id="UP000001936">
    <property type="component" value="Chromosome"/>
</dbReference>
<dbReference type="GO" id="GO:0005829">
    <property type="term" value="C:cytosol"/>
    <property type="evidence" value="ECO:0007669"/>
    <property type="project" value="TreeGrafter"/>
</dbReference>
<dbReference type="GO" id="GO:0004813">
    <property type="term" value="F:alanine-tRNA ligase activity"/>
    <property type="evidence" value="ECO:0007669"/>
    <property type="project" value="UniProtKB-UniRule"/>
</dbReference>
<dbReference type="GO" id="GO:0002161">
    <property type="term" value="F:aminoacyl-tRNA deacylase activity"/>
    <property type="evidence" value="ECO:0007669"/>
    <property type="project" value="TreeGrafter"/>
</dbReference>
<dbReference type="GO" id="GO:0005524">
    <property type="term" value="F:ATP binding"/>
    <property type="evidence" value="ECO:0007669"/>
    <property type="project" value="UniProtKB-UniRule"/>
</dbReference>
<dbReference type="GO" id="GO:0000049">
    <property type="term" value="F:tRNA binding"/>
    <property type="evidence" value="ECO:0007669"/>
    <property type="project" value="UniProtKB-KW"/>
</dbReference>
<dbReference type="GO" id="GO:0008270">
    <property type="term" value="F:zinc ion binding"/>
    <property type="evidence" value="ECO:0007669"/>
    <property type="project" value="UniProtKB-UniRule"/>
</dbReference>
<dbReference type="GO" id="GO:0006419">
    <property type="term" value="P:alanyl-tRNA aminoacylation"/>
    <property type="evidence" value="ECO:0007669"/>
    <property type="project" value="UniProtKB-UniRule"/>
</dbReference>
<dbReference type="GO" id="GO:0045892">
    <property type="term" value="P:negative regulation of DNA-templated transcription"/>
    <property type="evidence" value="ECO:0007669"/>
    <property type="project" value="TreeGrafter"/>
</dbReference>
<dbReference type="CDD" id="cd00673">
    <property type="entry name" value="AlaRS_core"/>
    <property type="match status" value="1"/>
</dbReference>
<dbReference type="FunFam" id="2.40.30.130:FF:000001">
    <property type="entry name" value="Alanine--tRNA ligase"/>
    <property type="match status" value="1"/>
</dbReference>
<dbReference type="FunFam" id="3.10.310.40:FF:000001">
    <property type="entry name" value="Alanine--tRNA ligase"/>
    <property type="match status" value="1"/>
</dbReference>
<dbReference type="FunFam" id="3.30.54.20:FF:000001">
    <property type="entry name" value="Alanine--tRNA ligase"/>
    <property type="match status" value="1"/>
</dbReference>
<dbReference type="FunFam" id="3.30.930.10:FF:000004">
    <property type="entry name" value="Alanine--tRNA ligase"/>
    <property type="match status" value="1"/>
</dbReference>
<dbReference type="FunFam" id="3.30.980.10:FF:000004">
    <property type="entry name" value="Alanine--tRNA ligase, cytoplasmic"/>
    <property type="match status" value="1"/>
</dbReference>
<dbReference type="Gene3D" id="2.40.30.130">
    <property type="match status" value="1"/>
</dbReference>
<dbReference type="Gene3D" id="3.10.310.40">
    <property type="match status" value="1"/>
</dbReference>
<dbReference type="Gene3D" id="3.30.54.20">
    <property type="match status" value="1"/>
</dbReference>
<dbReference type="Gene3D" id="6.10.250.550">
    <property type="match status" value="1"/>
</dbReference>
<dbReference type="Gene3D" id="3.30.930.10">
    <property type="entry name" value="Bira Bifunctional Protein, Domain 2"/>
    <property type="match status" value="1"/>
</dbReference>
<dbReference type="Gene3D" id="3.30.980.10">
    <property type="entry name" value="Threonyl-trna Synthetase, Chain A, domain 2"/>
    <property type="match status" value="1"/>
</dbReference>
<dbReference type="HAMAP" id="MF_00036_B">
    <property type="entry name" value="Ala_tRNA_synth_B"/>
    <property type="match status" value="1"/>
</dbReference>
<dbReference type="InterPro" id="IPR045864">
    <property type="entry name" value="aa-tRNA-synth_II/BPL/LPL"/>
</dbReference>
<dbReference type="InterPro" id="IPR002318">
    <property type="entry name" value="Ala-tRNA-lgiase_IIc"/>
</dbReference>
<dbReference type="InterPro" id="IPR018162">
    <property type="entry name" value="Ala-tRNA-ligase_IIc_anticod-bd"/>
</dbReference>
<dbReference type="InterPro" id="IPR018165">
    <property type="entry name" value="Ala-tRNA-synth_IIc_core"/>
</dbReference>
<dbReference type="InterPro" id="IPR018164">
    <property type="entry name" value="Ala-tRNA-synth_IIc_N"/>
</dbReference>
<dbReference type="InterPro" id="IPR050058">
    <property type="entry name" value="Ala-tRNA_ligase"/>
</dbReference>
<dbReference type="InterPro" id="IPR023033">
    <property type="entry name" value="Ala_tRNA_ligase_euk/bac"/>
</dbReference>
<dbReference type="InterPro" id="IPR003156">
    <property type="entry name" value="DHHA1_dom"/>
</dbReference>
<dbReference type="InterPro" id="IPR018163">
    <property type="entry name" value="Thr/Ala-tRNA-synth_IIc_edit"/>
</dbReference>
<dbReference type="InterPro" id="IPR009000">
    <property type="entry name" value="Transl_B-barrel_sf"/>
</dbReference>
<dbReference type="InterPro" id="IPR012947">
    <property type="entry name" value="tRNA_SAD"/>
</dbReference>
<dbReference type="NCBIfam" id="TIGR00344">
    <property type="entry name" value="alaS"/>
    <property type="match status" value="1"/>
</dbReference>
<dbReference type="PANTHER" id="PTHR11777:SF9">
    <property type="entry name" value="ALANINE--TRNA LIGASE, CYTOPLASMIC"/>
    <property type="match status" value="1"/>
</dbReference>
<dbReference type="PANTHER" id="PTHR11777">
    <property type="entry name" value="ALANYL-TRNA SYNTHETASE"/>
    <property type="match status" value="1"/>
</dbReference>
<dbReference type="Pfam" id="PF02272">
    <property type="entry name" value="DHHA1"/>
    <property type="match status" value="1"/>
</dbReference>
<dbReference type="Pfam" id="PF01411">
    <property type="entry name" value="tRNA-synt_2c"/>
    <property type="match status" value="1"/>
</dbReference>
<dbReference type="Pfam" id="PF07973">
    <property type="entry name" value="tRNA_SAD"/>
    <property type="match status" value="1"/>
</dbReference>
<dbReference type="PRINTS" id="PR00980">
    <property type="entry name" value="TRNASYNTHALA"/>
</dbReference>
<dbReference type="SMART" id="SM00863">
    <property type="entry name" value="tRNA_SAD"/>
    <property type="match status" value="1"/>
</dbReference>
<dbReference type="SUPFAM" id="SSF55681">
    <property type="entry name" value="Class II aaRS and biotin synthetases"/>
    <property type="match status" value="1"/>
</dbReference>
<dbReference type="SUPFAM" id="SSF101353">
    <property type="entry name" value="Putative anticodon-binding domain of alanyl-tRNA synthetase (AlaRS)"/>
    <property type="match status" value="1"/>
</dbReference>
<dbReference type="SUPFAM" id="SSF55186">
    <property type="entry name" value="ThrRS/AlaRS common domain"/>
    <property type="match status" value="1"/>
</dbReference>
<dbReference type="SUPFAM" id="SSF50447">
    <property type="entry name" value="Translation proteins"/>
    <property type="match status" value="1"/>
</dbReference>
<dbReference type="PROSITE" id="PS50860">
    <property type="entry name" value="AA_TRNA_LIGASE_II_ALA"/>
    <property type="match status" value="1"/>
</dbReference>
<evidence type="ECO:0000255" key="1">
    <source>
        <dbReference type="HAMAP-Rule" id="MF_00036"/>
    </source>
</evidence>
<evidence type="ECO:0000305" key="2"/>
<proteinExistence type="inferred from homology"/>
<accession>Q2K7T4</accession>
<feature type="chain" id="PRO_0000347750" description="Alanine--tRNA ligase">
    <location>
        <begin position="1"/>
        <end position="884"/>
    </location>
</feature>
<feature type="binding site" evidence="1">
    <location>
        <position position="562"/>
    </location>
    <ligand>
        <name>Zn(2+)</name>
        <dbReference type="ChEBI" id="CHEBI:29105"/>
    </ligand>
</feature>
<feature type="binding site" evidence="1">
    <location>
        <position position="566"/>
    </location>
    <ligand>
        <name>Zn(2+)</name>
        <dbReference type="ChEBI" id="CHEBI:29105"/>
    </ligand>
</feature>
<feature type="binding site" evidence="1">
    <location>
        <position position="674"/>
    </location>
    <ligand>
        <name>Zn(2+)</name>
        <dbReference type="ChEBI" id="CHEBI:29105"/>
    </ligand>
</feature>
<feature type="binding site" evidence="1">
    <location>
        <position position="678"/>
    </location>
    <ligand>
        <name>Zn(2+)</name>
        <dbReference type="ChEBI" id="CHEBI:29105"/>
    </ligand>
</feature>
<protein>
    <recommendedName>
        <fullName evidence="1">Alanine--tRNA ligase</fullName>
        <ecNumber evidence="1">6.1.1.7</ecNumber>
    </recommendedName>
    <alternativeName>
        <fullName evidence="1">Alanyl-tRNA synthetase</fullName>
        <shortName evidence="1">AlaRS</shortName>
    </alternativeName>
</protein>
<name>SYA_RHIEC</name>
<comment type="function">
    <text evidence="1">Catalyzes the attachment of alanine to tRNA(Ala) in a two-step reaction: alanine is first activated by ATP to form Ala-AMP and then transferred to the acceptor end of tRNA(Ala). Also edits incorrectly charged Ser-tRNA(Ala) and Gly-tRNA(Ala) via its editing domain.</text>
</comment>
<comment type="catalytic activity">
    <reaction evidence="1">
        <text>tRNA(Ala) + L-alanine + ATP = L-alanyl-tRNA(Ala) + AMP + diphosphate</text>
        <dbReference type="Rhea" id="RHEA:12540"/>
        <dbReference type="Rhea" id="RHEA-COMP:9657"/>
        <dbReference type="Rhea" id="RHEA-COMP:9923"/>
        <dbReference type="ChEBI" id="CHEBI:30616"/>
        <dbReference type="ChEBI" id="CHEBI:33019"/>
        <dbReference type="ChEBI" id="CHEBI:57972"/>
        <dbReference type="ChEBI" id="CHEBI:78442"/>
        <dbReference type="ChEBI" id="CHEBI:78497"/>
        <dbReference type="ChEBI" id="CHEBI:456215"/>
        <dbReference type="EC" id="6.1.1.7"/>
    </reaction>
</comment>
<comment type="cofactor">
    <cofactor evidence="1">
        <name>Zn(2+)</name>
        <dbReference type="ChEBI" id="CHEBI:29105"/>
    </cofactor>
    <text evidence="1">Binds 1 zinc ion per subunit.</text>
</comment>
<comment type="subcellular location">
    <subcellularLocation>
        <location evidence="1">Cytoplasm</location>
    </subcellularLocation>
</comment>
<comment type="domain">
    <text evidence="1">Consists of three domains; the N-terminal catalytic domain, the editing domain and the C-terminal C-Ala domain. The editing domain removes incorrectly charged amino acids, while the C-Ala domain, along with tRNA(Ala), serves as a bridge to cooperatively bring together the editing and aminoacylation centers thus stimulating deacylation of misacylated tRNAs.</text>
</comment>
<comment type="similarity">
    <text evidence="1">Belongs to the class-II aminoacyl-tRNA synthetase family.</text>
</comment>
<comment type="sequence caution" evidence="2">
    <conflict type="erroneous initiation">
        <sequence resource="EMBL-CDS" id="ABC91102"/>
    </conflict>
</comment>
<organism>
    <name type="scientific">Rhizobium etli (strain ATCC 51251 / DSM 11541 / JCM 21823 / NBRC 15573 / CFN 42)</name>
    <dbReference type="NCBI Taxonomy" id="347834"/>
    <lineage>
        <taxon>Bacteria</taxon>
        <taxon>Pseudomonadati</taxon>
        <taxon>Pseudomonadota</taxon>
        <taxon>Alphaproteobacteria</taxon>
        <taxon>Hyphomicrobiales</taxon>
        <taxon>Rhizobiaceae</taxon>
        <taxon>Rhizobium/Agrobacterium group</taxon>
        <taxon>Rhizobium</taxon>
    </lineage>
</organism>
<gene>
    <name evidence="1" type="primary">alaS</name>
    <name type="ordered locus">RHE_CH02322</name>
</gene>
<keyword id="KW-0030">Aminoacyl-tRNA synthetase</keyword>
<keyword id="KW-0067">ATP-binding</keyword>
<keyword id="KW-0963">Cytoplasm</keyword>
<keyword id="KW-0436">Ligase</keyword>
<keyword id="KW-0479">Metal-binding</keyword>
<keyword id="KW-0547">Nucleotide-binding</keyword>
<keyword id="KW-0648">Protein biosynthesis</keyword>
<keyword id="KW-1185">Reference proteome</keyword>
<keyword id="KW-0694">RNA-binding</keyword>
<keyword id="KW-0820">tRNA-binding</keyword>
<keyword id="KW-0862">Zinc</keyword>
<sequence length="884" mass="95246">MSGVNDIRSTFLDYFKKNGHEIVPSSPLVPRNDPTLMFTNAGMVQFKNVFTGLEKRPYATATTSQKCVRAGGKHNDLDNVGYTARHLTFFEMLGNFSFGDYFKENAIELAWKLVTEGFGLPKHRLLVTVYSEDEEAAALWKKIAGFSDDKIIRIPTSDNFWQMGDTGPCGPCSEIFIDQGENVWGGPPGSPEEDGDRFLEFWNLVFMQFEQTEPGVRNPLPRPSIDTGMGLERMACILQGVQSVFDTDLFRTLTGTIEDTIGVKAEGSASHRVIADHLRSSAFLIADGVLPSNEGRGYVLRRIMRRAMRHAQLLGAKEPLMYKLLPTLVQEMGRAYPELARAEALISETLKLEEGRFRKTLERGLSLLSDATADLDKGDMLDGETAFKLYDTYGFPLDLTQDALRAREIGVDIAGFTDAMQRQKAEARSHWAGSGEKATETIWFELREKHGATEFLGYDTEAAEGVVQAIVRDGAVAAEAKAGDKVQIVVNQTPFYGESGGQMGDAGVISSDHGKIEISDTQKRGEGLFVHLGTVIEGVVRDGDAVAMTVDHARRSRLRANHSATHLLHEALREVLGTHVAQKGSLVAPERLRFDVSHPKPMTPEELKIVEDMANEIVLQNSPVTTRLMSVDDAIAEGAMALFGEKYGDEVRVVSMGTGLHGAKSNKPYSVELCGGTHVSATGQIGLVRILGESAVGAGVRRLEAVTGESAREYLAEQDDRVKTLAASLKVQPSEVLSRVEALIDERRKLEKELADAKRKLAMGGGQGGSGDAVREVAGVKFLGKSISGVDPKDLKGLADEGKTSIGSGVVALIGVSEDGKASAVVAVTPDLVERYSAVDLVRIASVALGGKGGGGRPDMAQAGGPDGSKADEAIEAVALALAG</sequence>
<reference key="1">
    <citation type="journal article" date="2006" name="Proc. Natl. Acad. Sci. U.S.A.">
        <title>The partitioned Rhizobium etli genome: genetic and metabolic redundancy in seven interacting replicons.</title>
        <authorList>
            <person name="Gonzalez V."/>
            <person name="Santamaria R.I."/>
            <person name="Bustos P."/>
            <person name="Hernandez-Gonzalez I."/>
            <person name="Medrano-Soto A."/>
            <person name="Moreno-Hagelsieb G."/>
            <person name="Janga S.C."/>
            <person name="Ramirez M.A."/>
            <person name="Jimenez-Jacinto V."/>
            <person name="Collado-Vides J."/>
            <person name="Davila G."/>
        </authorList>
    </citation>
    <scope>NUCLEOTIDE SEQUENCE [LARGE SCALE GENOMIC DNA]</scope>
    <source>
        <strain>ATCC 51251 / DSM 11541 / JCM 21823 / NBRC 15573 / CFN 42</strain>
    </source>
</reference>